<protein>
    <recommendedName>
        <fullName>Uncharacterized protein TP_0751</fullName>
    </recommendedName>
</protein>
<feature type="signal peptide" evidence="1">
    <location>
        <begin position="1"/>
        <end position="28"/>
    </location>
</feature>
<feature type="chain" id="PRO_0000014257" description="Uncharacterized protein TP_0751">
    <location>
        <begin position="29"/>
        <end position="237"/>
    </location>
</feature>
<feature type="region of interest" description="Disordered" evidence="2">
    <location>
        <begin position="52"/>
        <end position="96"/>
    </location>
</feature>
<feature type="compositionally biased region" description="Polar residues" evidence="2">
    <location>
        <begin position="63"/>
        <end position="75"/>
    </location>
</feature>
<feature type="helix" evidence="3">
    <location>
        <begin position="99"/>
        <end position="112"/>
    </location>
</feature>
<feature type="helix" evidence="3">
    <location>
        <begin position="120"/>
        <end position="122"/>
    </location>
</feature>
<feature type="strand" evidence="3">
    <location>
        <begin position="124"/>
        <end position="129"/>
    </location>
</feature>
<feature type="strand" evidence="3">
    <location>
        <begin position="142"/>
        <end position="146"/>
    </location>
</feature>
<feature type="turn" evidence="3">
    <location>
        <begin position="147"/>
        <end position="150"/>
    </location>
</feature>
<feature type="strand" evidence="3">
    <location>
        <begin position="151"/>
        <end position="156"/>
    </location>
</feature>
<feature type="strand" evidence="3">
    <location>
        <begin position="159"/>
        <end position="171"/>
    </location>
</feature>
<feature type="strand" evidence="3">
    <location>
        <begin position="174"/>
        <end position="183"/>
    </location>
</feature>
<feature type="strand" evidence="3">
    <location>
        <begin position="188"/>
        <end position="197"/>
    </location>
</feature>
<feature type="strand" evidence="3">
    <location>
        <begin position="200"/>
        <end position="203"/>
    </location>
</feature>
<feature type="strand" evidence="3">
    <location>
        <begin position="205"/>
        <end position="208"/>
    </location>
</feature>
<feature type="strand" evidence="3">
    <location>
        <begin position="222"/>
        <end position="226"/>
    </location>
</feature>
<organism>
    <name type="scientific">Treponema pallidum (strain Nichols)</name>
    <dbReference type="NCBI Taxonomy" id="243276"/>
    <lineage>
        <taxon>Bacteria</taxon>
        <taxon>Pseudomonadati</taxon>
        <taxon>Spirochaetota</taxon>
        <taxon>Spirochaetia</taxon>
        <taxon>Spirochaetales</taxon>
        <taxon>Treponemataceae</taxon>
        <taxon>Treponema</taxon>
    </lineage>
</organism>
<evidence type="ECO:0000255" key="1"/>
<evidence type="ECO:0000256" key="2">
    <source>
        <dbReference type="SAM" id="MobiDB-lite"/>
    </source>
</evidence>
<evidence type="ECO:0007829" key="3">
    <source>
        <dbReference type="PDB" id="5JK2"/>
    </source>
</evidence>
<reference key="1">
    <citation type="journal article" date="1998" name="Science">
        <title>Complete genome sequence of Treponema pallidum, the syphilis spirochete.</title>
        <authorList>
            <person name="Fraser C.M."/>
            <person name="Norris S.J."/>
            <person name="Weinstock G.M."/>
            <person name="White O."/>
            <person name="Sutton G.G."/>
            <person name="Dodson R.J."/>
            <person name="Gwinn M.L."/>
            <person name="Hickey E.K."/>
            <person name="Clayton R.A."/>
            <person name="Ketchum K.A."/>
            <person name="Sodergren E."/>
            <person name="Hardham J.M."/>
            <person name="McLeod M.P."/>
            <person name="Salzberg S.L."/>
            <person name="Peterson J.D."/>
            <person name="Khalak H.G."/>
            <person name="Richardson D.L."/>
            <person name="Howell J.K."/>
            <person name="Chidambaram M."/>
            <person name="Utterback T.R."/>
            <person name="McDonald L.A."/>
            <person name="Artiach P."/>
            <person name="Bowman C."/>
            <person name="Cotton M.D."/>
            <person name="Fujii C."/>
            <person name="Garland S.A."/>
            <person name="Hatch B."/>
            <person name="Horst K."/>
            <person name="Roberts K.M."/>
            <person name="Sandusky M."/>
            <person name="Weidman J.F."/>
            <person name="Smith H.O."/>
            <person name="Venter J.C."/>
        </authorList>
    </citation>
    <scope>NUCLEOTIDE SEQUENCE [LARGE SCALE GENOMIC DNA]</scope>
    <source>
        <strain>Nichols</strain>
    </source>
</reference>
<dbReference type="EMBL" id="AE000520">
    <property type="protein sequence ID" value="AAC65720.1"/>
    <property type="molecule type" value="Genomic_DNA"/>
</dbReference>
<dbReference type="PIR" id="D71287">
    <property type="entry name" value="D71287"/>
</dbReference>
<dbReference type="PDB" id="5JK2">
    <property type="method" value="X-ray"/>
    <property type="resolution" value="2.15 A"/>
    <property type="chains" value="A/B/C/D/E/F/G/H/I=78-237"/>
</dbReference>
<dbReference type="PDBsum" id="5JK2"/>
<dbReference type="SMR" id="O83732"/>
<dbReference type="IntAct" id="O83732">
    <property type="interactions" value="15"/>
</dbReference>
<dbReference type="STRING" id="243276.TP_0751"/>
<dbReference type="EnsemblBacteria" id="AAC65720">
    <property type="protein sequence ID" value="AAC65720"/>
    <property type="gene ID" value="TP_0751"/>
</dbReference>
<dbReference type="KEGG" id="tpa:TP_0751"/>
<dbReference type="KEGG" id="tpw:TPANIC_0751"/>
<dbReference type="HOGENOM" id="CLU_1170245_0_0_12"/>
<dbReference type="OrthoDB" id="366418at2"/>
<dbReference type="Proteomes" id="UP000000811">
    <property type="component" value="Chromosome"/>
</dbReference>
<dbReference type="InterPro" id="IPR041037">
    <property type="entry name" value="Pallilysin"/>
</dbReference>
<dbReference type="Pfam" id="PF18663">
    <property type="entry name" value="Pallilysin"/>
    <property type="match status" value="1"/>
</dbReference>
<gene>
    <name type="ordered locus">TP_0751</name>
</gene>
<accession>O83732</accession>
<keyword id="KW-0002">3D-structure</keyword>
<keyword id="KW-1185">Reference proteome</keyword>
<keyword id="KW-0732">Signal</keyword>
<proteinExistence type="evidence at protein level"/>
<sequence length="237" mass="25769">MNRPLLSVAGSLFVAAWALYIFSCFQHGHVPPRRIPPHDTFGALPTAALPSNARDTAAHPSDTADNTSGSSTTTDPRSHGNAPPAPVGGAAQTHTQPPVQTAMRIALWNRATHGEQGALQHLLAGLWIQTEISPNSGDIHPLLFFDREHAEITFSRASVQEIFLVDSAHTHRKTVSFLTRNTAISSIRRRLEVTFESHEVIHVRAVEDVARLKIGSTSMWDGQYTRYHAGPASAPSP</sequence>
<name>Y751_TREPA</name>